<evidence type="ECO:0000255" key="1"/>
<evidence type="ECO:0000305" key="2"/>
<name>YCZN_BACSU</name>
<feature type="chain" id="PRO_0000384380" description="Uncharacterized membrane protein YczN">
    <location>
        <begin position="1"/>
        <end position="37"/>
    </location>
</feature>
<feature type="transmembrane region" description="Helical" evidence="1">
    <location>
        <begin position="16"/>
        <end position="36"/>
    </location>
</feature>
<sequence>MSGYSNGGGYGGISSFALIVVLFILLIIVGTAFVGGF</sequence>
<organism>
    <name type="scientific">Bacillus subtilis (strain 168)</name>
    <dbReference type="NCBI Taxonomy" id="224308"/>
    <lineage>
        <taxon>Bacteria</taxon>
        <taxon>Bacillati</taxon>
        <taxon>Bacillota</taxon>
        <taxon>Bacilli</taxon>
        <taxon>Bacillales</taxon>
        <taxon>Bacillaceae</taxon>
        <taxon>Bacillus</taxon>
    </lineage>
</organism>
<keyword id="KW-0472">Membrane</keyword>
<keyword id="KW-1185">Reference proteome</keyword>
<keyword id="KW-0812">Transmembrane</keyword>
<keyword id="KW-1133">Transmembrane helix</keyword>
<protein>
    <recommendedName>
        <fullName evidence="2">Uncharacterized membrane protein YczN</fullName>
    </recommendedName>
</protein>
<reference key="1">
    <citation type="journal article" date="1997" name="Nature">
        <title>The complete genome sequence of the Gram-positive bacterium Bacillus subtilis.</title>
        <authorList>
            <person name="Kunst F."/>
            <person name="Ogasawara N."/>
            <person name="Moszer I."/>
            <person name="Albertini A.M."/>
            <person name="Alloni G."/>
            <person name="Azevedo V."/>
            <person name="Bertero M.G."/>
            <person name="Bessieres P."/>
            <person name="Bolotin A."/>
            <person name="Borchert S."/>
            <person name="Borriss R."/>
            <person name="Boursier L."/>
            <person name="Brans A."/>
            <person name="Braun M."/>
            <person name="Brignell S.C."/>
            <person name="Bron S."/>
            <person name="Brouillet S."/>
            <person name="Bruschi C.V."/>
            <person name="Caldwell B."/>
            <person name="Capuano V."/>
            <person name="Carter N.M."/>
            <person name="Choi S.-K."/>
            <person name="Codani J.-J."/>
            <person name="Connerton I.F."/>
            <person name="Cummings N.J."/>
            <person name="Daniel R.A."/>
            <person name="Denizot F."/>
            <person name="Devine K.M."/>
            <person name="Duesterhoeft A."/>
            <person name="Ehrlich S.D."/>
            <person name="Emmerson P.T."/>
            <person name="Entian K.-D."/>
            <person name="Errington J."/>
            <person name="Fabret C."/>
            <person name="Ferrari E."/>
            <person name="Foulger D."/>
            <person name="Fritz C."/>
            <person name="Fujita M."/>
            <person name="Fujita Y."/>
            <person name="Fuma S."/>
            <person name="Galizzi A."/>
            <person name="Galleron N."/>
            <person name="Ghim S.-Y."/>
            <person name="Glaser P."/>
            <person name="Goffeau A."/>
            <person name="Golightly E.J."/>
            <person name="Grandi G."/>
            <person name="Guiseppi G."/>
            <person name="Guy B.J."/>
            <person name="Haga K."/>
            <person name="Haiech J."/>
            <person name="Harwood C.R."/>
            <person name="Henaut A."/>
            <person name="Hilbert H."/>
            <person name="Holsappel S."/>
            <person name="Hosono S."/>
            <person name="Hullo M.-F."/>
            <person name="Itaya M."/>
            <person name="Jones L.-M."/>
            <person name="Joris B."/>
            <person name="Karamata D."/>
            <person name="Kasahara Y."/>
            <person name="Klaerr-Blanchard M."/>
            <person name="Klein C."/>
            <person name="Kobayashi Y."/>
            <person name="Koetter P."/>
            <person name="Koningstein G."/>
            <person name="Krogh S."/>
            <person name="Kumano M."/>
            <person name="Kurita K."/>
            <person name="Lapidus A."/>
            <person name="Lardinois S."/>
            <person name="Lauber J."/>
            <person name="Lazarevic V."/>
            <person name="Lee S.-M."/>
            <person name="Levine A."/>
            <person name="Liu H."/>
            <person name="Masuda S."/>
            <person name="Mauel C."/>
            <person name="Medigue C."/>
            <person name="Medina N."/>
            <person name="Mellado R.P."/>
            <person name="Mizuno M."/>
            <person name="Moestl D."/>
            <person name="Nakai S."/>
            <person name="Noback M."/>
            <person name="Noone D."/>
            <person name="O'Reilly M."/>
            <person name="Ogawa K."/>
            <person name="Ogiwara A."/>
            <person name="Oudega B."/>
            <person name="Park S.-H."/>
            <person name="Parro V."/>
            <person name="Pohl T.M."/>
            <person name="Portetelle D."/>
            <person name="Porwollik S."/>
            <person name="Prescott A.M."/>
            <person name="Presecan E."/>
            <person name="Pujic P."/>
            <person name="Purnelle B."/>
            <person name="Rapoport G."/>
            <person name="Rey M."/>
            <person name="Reynolds S."/>
            <person name="Rieger M."/>
            <person name="Rivolta C."/>
            <person name="Rocha E."/>
            <person name="Roche B."/>
            <person name="Rose M."/>
            <person name="Sadaie Y."/>
            <person name="Sato T."/>
            <person name="Scanlan E."/>
            <person name="Schleich S."/>
            <person name="Schroeter R."/>
            <person name="Scoffone F."/>
            <person name="Sekiguchi J."/>
            <person name="Sekowska A."/>
            <person name="Seror S.J."/>
            <person name="Serror P."/>
            <person name="Shin B.-S."/>
            <person name="Soldo B."/>
            <person name="Sorokin A."/>
            <person name="Tacconi E."/>
            <person name="Takagi T."/>
            <person name="Takahashi H."/>
            <person name="Takemaru K."/>
            <person name="Takeuchi M."/>
            <person name="Tamakoshi A."/>
            <person name="Tanaka T."/>
            <person name="Terpstra P."/>
            <person name="Tognoni A."/>
            <person name="Tosato V."/>
            <person name="Uchiyama S."/>
            <person name="Vandenbol M."/>
            <person name="Vannier F."/>
            <person name="Vassarotti A."/>
            <person name="Viari A."/>
            <person name="Wambutt R."/>
            <person name="Wedler E."/>
            <person name="Wedler H."/>
            <person name="Weitzenegger T."/>
            <person name="Winters P."/>
            <person name="Wipat A."/>
            <person name="Yamamoto H."/>
            <person name="Yamane K."/>
            <person name="Yasumoto K."/>
            <person name="Yata K."/>
            <person name="Yoshida K."/>
            <person name="Yoshikawa H.-F."/>
            <person name="Zumstein E."/>
            <person name="Yoshikawa H."/>
            <person name="Danchin A."/>
        </authorList>
    </citation>
    <scope>NUCLEOTIDE SEQUENCE [LARGE SCALE GENOMIC DNA]</scope>
    <source>
        <strain>168</strain>
    </source>
</reference>
<dbReference type="EMBL" id="AL009126">
    <property type="protein sequence ID" value="CAX52548.1"/>
    <property type="molecule type" value="Genomic_DNA"/>
</dbReference>
<dbReference type="RefSeq" id="WP_003234495.1">
    <property type="nucleotide sequence ID" value="NZ_OZ025638.1"/>
</dbReference>
<dbReference type="RefSeq" id="YP_003097677.1">
    <property type="nucleotide sequence ID" value="NC_000964.3"/>
</dbReference>
<dbReference type="FunCoup" id="C0H3V1">
    <property type="interactions" value="1"/>
</dbReference>
<dbReference type="STRING" id="224308.BSU03789"/>
<dbReference type="PaxDb" id="224308-BSU03789"/>
<dbReference type="EnsemblBacteria" id="CAX52548">
    <property type="protein sequence ID" value="CAX52548"/>
    <property type="gene ID" value="BSU_03789"/>
</dbReference>
<dbReference type="GeneID" id="8302990"/>
<dbReference type="KEGG" id="bsu:BSU03789"/>
<dbReference type="PATRIC" id="fig|224308.179.peg.400"/>
<dbReference type="InParanoid" id="C0H3V1"/>
<dbReference type="BioCyc" id="BSUB:BSU03789-MONOMER"/>
<dbReference type="Proteomes" id="UP000001570">
    <property type="component" value="Chromosome"/>
</dbReference>
<dbReference type="GO" id="GO:0016020">
    <property type="term" value="C:membrane"/>
    <property type="evidence" value="ECO:0007669"/>
    <property type="project" value="UniProtKB-SubCell"/>
</dbReference>
<dbReference type="InterPro" id="IPR010070">
    <property type="entry name" value="YjcZ-like"/>
</dbReference>
<dbReference type="NCBIfam" id="TIGR01732">
    <property type="entry name" value="tiny_TM_bacill"/>
    <property type="match status" value="1"/>
</dbReference>
<dbReference type="Pfam" id="PF09680">
    <property type="entry name" value="YjcZ_2"/>
    <property type="match status" value="1"/>
</dbReference>
<proteinExistence type="inferred from homology"/>
<gene>
    <name type="primary">yczN</name>
    <name type="ordered locus">BSU03789</name>
</gene>
<accession>C0H3V1</accession>
<comment type="subcellular location">
    <subcellularLocation>
        <location evidence="1">Membrane</location>
        <topology evidence="1">Single-pass membrane protein</topology>
    </subcellularLocation>
</comment>
<comment type="similarity">
    <text evidence="2">Belongs to the SscA family.</text>
</comment>